<protein>
    <recommendedName>
        <fullName>Methionine-R-sulfoxide reductase B1</fullName>
        <shortName>MsrB1</shortName>
        <ecNumber evidence="1">1.8.4.12</ecNumber>
        <ecNumber evidence="1">1.8.4.14</ecNumber>
    </recommendedName>
    <alternativeName>
        <fullName>Selenoprotein X</fullName>
        <shortName>SelX</shortName>
    </alternativeName>
</protein>
<feature type="chain" id="PRO_0000318611" description="Methionine-R-sulfoxide reductase B1">
    <location>
        <begin position="1"/>
        <end position="116"/>
    </location>
</feature>
<feature type="domain" description="MsrB" evidence="3">
    <location>
        <begin position="1"/>
        <end position="106"/>
    </location>
</feature>
<feature type="active site" description="Nucleophile" evidence="3">
    <location>
        <position position="95"/>
    </location>
</feature>
<feature type="binding site" evidence="3">
    <location>
        <position position="23"/>
    </location>
    <ligand>
        <name>Zn(2+)</name>
        <dbReference type="ChEBI" id="CHEBI:29105"/>
    </ligand>
</feature>
<feature type="binding site" evidence="3">
    <location>
        <position position="26"/>
    </location>
    <ligand>
        <name>Zn(2+)</name>
        <dbReference type="ChEBI" id="CHEBI:29105"/>
    </ligand>
</feature>
<feature type="binding site" evidence="3">
    <location>
        <position position="71"/>
    </location>
    <ligand>
        <name>Zn(2+)</name>
        <dbReference type="ChEBI" id="CHEBI:29105"/>
    </ligand>
</feature>
<feature type="binding site" evidence="3">
    <location>
        <position position="74"/>
    </location>
    <ligand>
        <name>Zn(2+)</name>
        <dbReference type="ChEBI" id="CHEBI:29105"/>
    </ligand>
</feature>
<feature type="non-standard amino acid" description="Selenocysteine" evidence="2">
    <location>
        <position position="95"/>
    </location>
</feature>
<keyword id="KW-0963">Cytoplasm</keyword>
<keyword id="KW-0206">Cytoskeleton</keyword>
<keyword id="KW-0391">Immunity</keyword>
<keyword id="KW-0399">Innate immunity</keyword>
<keyword id="KW-0479">Metal-binding</keyword>
<keyword id="KW-0539">Nucleus</keyword>
<keyword id="KW-0560">Oxidoreductase</keyword>
<keyword id="KW-1185">Reference proteome</keyword>
<keyword id="KW-0712">Selenocysteine</keyword>
<keyword id="KW-0832">Ubl conjugation</keyword>
<keyword id="KW-0862">Zinc</keyword>
<sequence>MSFCSFFGGEIFQNHFEPGIYVCAKCGYELFSSRSKYAHSSPWPAFTETIHADSVAKRPEHNRPGAIKVSCGRCGNGLGHEFLNDGPKRGQSRFUIFSSSLKFIPKAEETSASQGQ</sequence>
<comment type="function">
    <text evidence="1">Methionine-sulfoxide reductase that specifically reduces methionine (R)-sulfoxide back to methionine. While in many cases, methionine oxidation is the result of random oxidation following oxidative stress, methionine oxidation is also a post-translational modification that takes place on specific residue. Acts as a regulator of actin assembly by reducing methionine (R)-sulfoxide mediated by MICALs (MICAL1, MICAL2 or MICAL3) on actin, thereby promoting filament repolymerization. Plays a role in innate immunity by reducing oxidized actin, leading to actin repolymerization in macrophages.</text>
</comment>
<comment type="catalytic activity">
    <reaction evidence="1">
        <text>L-methionyl-[protein] + [thioredoxin]-disulfide + H2O = L-methionyl-(R)-S-oxide-[protein] + [thioredoxin]-dithiol</text>
        <dbReference type="Rhea" id="RHEA:24164"/>
        <dbReference type="Rhea" id="RHEA-COMP:10698"/>
        <dbReference type="Rhea" id="RHEA-COMP:10700"/>
        <dbReference type="Rhea" id="RHEA-COMP:12313"/>
        <dbReference type="Rhea" id="RHEA-COMP:12314"/>
        <dbReference type="ChEBI" id="CHEBI:15377"/>
        <dbReference type="ChEBI" id="CHEBI:16044"/>
        <dbReference type="ChEBI" id="CHEBI:29950"/>
        <dbReference type="ChEBI" id="CHEBI:45764"/>
        <dbReference type="ChEBI" id="CHEBI:50058"/>
        <dbReference type="EC" id="1.8.4.12"/>
    </reaction>
</comment>
<comment type="catalytic activity">
    <reaction evidence="1">
        <text>[thioredoxin]-disulfide + L-methionine + H2O = L-methionine (R)-S-oxide + [thioredoxin]-dithiol</text>
        <dbReference type="Rhea" id="RHEA:21260"/>
        <dbReference type="Rhea" id="RHEA-COMP:10698"/>
        <dbReference type="Rhea" id="RHEA-COMP:10700"/>
        <dbReference type="ChEBI" id="CHEBI:15377"/>
        <dbReference type="ChEBI" id="CHEBI:29950"/>
        <dbReference type="ChEBI" id="CHEBI:50058"/>
        <dbReference type="ChEBI" id="CHEBI:57844"/>
        <dbReference type="ChEBI" id="CHEBI:58773"/>
        <dbReference type="EC" id="1.8.4.14"/>
    </reaction>
</comment>
<comment type="cofactor">
    <cofactor evidence="1">
        <name>Zn(2+)</name>
        <dbReference type="ChEBI" id="CHEBI:29105"/>
    </cofactor>
    <text evidence="1">Binds 1 zinc ion per subunit.</text>
</comment>
<comment type="subcellular location">
    <subcellularLocation>
        <location evidence="1">Cytoplasm</location>
    </subcellularLocation>
    <subcellularLocation>
        <location evidence="1">Nucleus</location>
    </subcellularLocation>
    <subcellularLocation>
        <location evidence="1">Cytoplasm</location>
        <location evidence="1">Cytoskeleton</location>
    </subcellularLocation>
</comment>
<comment type="PTM">
    <text evidence="2">Truncated MSRB1/SEPX1 proteins produced by failed UGA/Sec decoding are ubiquitinated by the CRL2(FEM1C) E3 ubiquitin-protein ligase complex.</text>
</comment>
<comment type="similarity">
    <text evidence="4">Belongs to the MsrB Met sulfoxide reductase family.</text>
</comment>
<comment type="sequence caution" evidence="4">
    <conflict type="erroneous termination">
        <sequence resource="EMBL-CDS" id="AAI05189"/>
    </conflict>
    <text>Truncated C-terminus.</text>
</comment>
<evidence type="ECO:0000250" key="1">
    <source>
        <dbReference type="UniProtKB" id="Q9JLC3"/>
    </source>
</evidence>
<evidence type="ECO:0000250" key="2">
    <source>
        <dbReference type="UniProtKB" id="Q9NZV6"/>
    </source>
</evidence>
<evidence type="ECO:0000255" key="3">
    <source>
        <dbReference type="PROSITE-ProRule" id="PRU01126"/>
    </source>
</evidence>
<evidence type="ECO:0000305" key="4"/>
<proteinExistence type="inferred from homology"/>
<gene>
    <name type="primary">MSRB1</name>
    <name type="synonym">SEPX1</name>
</gene>
<organism>
    <name type="scientific">Bos taurus</name>
    <name type="common">Bovine</name>
    <dbReference type="NCBI Taxonomy" id="9913"/>
    <lineage>
        <taxon>Eukaryota</taxon>
        <taxon>Metazoa</taxon>
        <taxon>Chordata</taxon>
        <taxon>Craniata</taxon>
        <taxon>Vertebrata</taxon>
        <taxon>Euteleostomi</taxon>
        <taxon>Mammalia</taxon>
        <taxon>Eutheria</taxon>
        <taxon>Laurasiatheria</taxon>
        <taxon>Artiodactyla</taxon>
        <taxon>Ruminantia</taxon>
        <taxon>Pecora</taxon>
        <taxon>Bovidae</taxon>
        <taxon>Bovinae</taxon>
        <taxon>Bos</taxon>
    </lineage>
</organism>
<accession>Q3MHL9</accession>
<name>MSRB1_BOVIN</name>
<dbReference type="EC" id="1.8.4.12" evidence="1"/>
<dbReference type="EC" id="1.8.4.14" evidence="1"/>
<dbReference type="EMBL" id="BC105188">
    <property type="protein sequence ID" value="AAI05189.1"/>
    <property type="status" value="ALT_SEQ"/>
    <property type="molecule type" value="mRNA"/>
</dbReference>
<dbReference type="RefSeq" id="NP_001029982.2">
    <property type="nucleotide sequence ID" value="NM_001034810.2"/>
</dbReference>
<dbReference type="FunCoup" id="Q3MHL9">
    <property type="interactions" value="241"/>
</dbReference>
<dbReference type="STRING" id="9913.ENSBTAP00000068260"/>
<dbReference type="GeneID" id="618441"/>
<dbReference type="KEGG" id="bta:618441"/>
<dbReference type="CTD" id="51734"/>
<dbReference type="InParanoid" id="Q3MHL9"/>
<dbReference type="OrthoDB" id="44061at2759"/>
<dbReference type="Proteomes" id="UP000009136">
    <property type="component" value="Unplaced"/>
</dbReference>
<dbReference type="GO" id="GO:0005737">
    <property type="term" value="C:cytoplasm"/>
    <property type="evidence" value="ECO:0007669"/>
    <property type="project" value="UniProtKB-SubCell"/>
</dbReference>
<dbReference type="GO" id="GO:0005856">
    <property type="term" value="C:cytoskeleton"/>
    <property type="evidence" value="ECO:0007669"/>
    <property type="project" value="UniProtKB-SubCell"/>
</dbReference>
<dbReference type="GO" id="GO:0005634">
    <property type="term" value="C:nucleus"/>
    <property type="evidence" value="ECO:0000318"/>
    <property type="project" value="GO_Central"/>
</dbReference>
<dbReference type="GO" id="GO:0003779">
    <property type="term" value="F:actin binding"/>
    <property type="evidence" value="ECO:0000250"/>
    <property type="project" value="UniProtKB"/>
</dbReference>
<dbReference type="GO" id="GO:0033745">
    <property type="term" value="F:L-methionine-(R)-S-oxide reductase activity"/>
    <property type="evidence" value="ECO:0007669"/>
    <property type="project" value="UniProtKB-EC"/>
</dbReference>
<dbReference type="GO" id="GO:0046872">
    <property type="term" value="F:metal ion binding"/>
    <property type="evidence" value="ECO:0007669"/>
    <property type="project" value="UniProtKB-KW"/>
</dbReference>
<dbReference type="GO" id="GO:0033743">
    <property type="term" value="F:peptide-methionine (R)-S-oxide reductase activity"/>
    <property type="evidence" value="ECO:0000250"/>
    <property type="project" value="UniProtKB"/>
</dbReference>
<dbReference type="GO" id="GO:0030041">
    <property type="term" value="P:actin filament polymerization"/>
    <property type="evidence" value="ECO:0000250"/>
    <property type="project" value="UniProtKB"/>
</dbReference>
<dbReference type="GO" id="GO:0045087">
    <property type="term" value="P:innate immune response"/>
    <property type="evidence" value="ECO:0000250"/>
    <property type="project" value="UniProtKB"/>
</dbReference>
<dbReference type="GO" id="GO:0030091">
    <property type="term" value="P:protein repair"/>
    <property type="evidence" value="ECO:0000318"/>
    <property type="project" value="GO_Central"/>
</dbReference>
<dbReference type="FunFam" id="2.170.150.20:FF:000008">
    <property type="entry name" value="methionine-R-sulfoxide reductase B1"/>
    <property type="match status" value="1"/>
</dbReference>
<dbReference type="Gene3D" id="2.170.150.20">
    <property type="entry name" value="Peptide methionine sulfoxide reductase"/>
    <property type="match status" value="1"/>
</dbReference>
<dbReference type="InterPro" id="IPR002579">
    <property type="entry name" value="Met_Sox_Rdtase_MsrB_dom"/>
</dbReference>
<dbReference type="InterPro" id="IPR052150">
    <property type="entry name" value="MsrB_Met_sulfoxide_reductase"/>
</dbReference>
<dbReference type="InterPro" id="IPR011057">
    <property type="entry name" value="Mss4-like_sf"/>
</dbReference>
<dbReference type="PANTHER" id="PTHR46755">
    <property type="entry name" value="METHIONINE-R-SULFOXIDE REDUCTASE B1"/>
    <property type="match status" value="1"/>
</dbReference>
<dbReference type="PANTHER" id="PTHR46755:SF5">
    <property type="entry name" value="METHIONINE-R-SULFOXIDE REDUCTASE B1"/>
    <property type="match status" value="1"/>
</dbReference>
<dbReference type="Pfam" id="PF01641">
    <property type="entry name" value="SelR"/>
    <property type="match status" value="1"/>
</dbReference>
<dbReference type="SUPFAM" id="SSF51316">
    <property type="entry name" value="Mss4-like"/>
    <property type="match status" value="1"/>
</dbReference>
<dbReference type="PROSITE" id="PS51790">
    <property type="entry name" value="MSRB"/>
    <property type="match status" value="1"/>
</dbReference>
<reference key="1">
    <citation type="submission" date="2005-09" db="EMBL/GenBank/DDBJ databases">
        <authorList>
            <consortium name="NIH - Mammalian Gene Collection (MGC) project"/>
        </authorList>
    </citation>
    <scope>NUCLEOTIDE SEQUENCE [LARGE SCALE MRNA]</scope>
    <source>
        <strain>Hereford</strain>
        <tissue>Heart ventricle</tissue>
    </source>
</reference>